<name>RS3_SYNJA</name>
<dbReference type="EMBL" id="CP000239">
    <property type="protein sequence ID" value="ABC99360.1"/>
    <property type="molecule type" value="Genomic_DNA"/>
</dbReference>
<dbReference type="RefSeq" id="WP_011430041.1">
    <property type="nucleotide sequence ID" value="NC_007775.1"/>
</dbReference>
<dbReference type="SMR" id="Q2JV87"/>
<dbReference type="STRING" id="321327.CYA_1172"/>
<dbReference type="KEGG" id="cya:CYA_1172"/>
<dbReference type="eggNOG" id="COG0092">
    <property type="taxonomic scope" value="Bacteria"/>
</dbReference>
<dbReference type="HOGENOM" id="CLU_058591_0_2_3"/>
<dbReference type="OrthoDB" id="9806396at2"/>
<dbReference type="Proteomes" id="UP000008818">
    <property type="component" value="Chromosome"/>
</dbReference>
<dbReference type="GO" id="GO:0022627">
    <property type="term" value="C:cytosolic small ribosomal subunit"/>
    <property type="evidence" value="ECO:0007669"/>
    <property type="project" value="TreeGrafter"/>
</dbReference>
<dbReference type="GO" id="GO:0003729">
    <property type="term" value="F:mRNA binding"/>
    <property type="evidence" value="ECO:0007669"/>
    <property type="project" value="UniProtKB-UniRule"/>
</dbReference>
<dbReference type="GO" id="GO:0019843">
    <property type="term" value="F:rRNA binding"/>
    <property type="evidence" value="ECO:0007669"/>
    <property type="project" value="UniProtKB-UniRule"/>
</dbReference>
<dbReference type="GO" id="GO:0003735">
    <property type="term" value="F:structural constituent of ribosome"/>
    <property type="evidence" value="ECO:0007669"/>
    <property type="project" value="InterPro"/>
</dbReference>
<dbReference type="GO" id="GO:0006412">
    <property type="term" value="P:translation"/>
    <property type="evidence" value="ECO:0007669"/>
    <property type="project" value="UniProtKB-UniRule"/>
</dbReference>
<dbReference type="CDD" id="cd02412">
    <property type="entry name" value="KH-II_30S_S3"/>
    <property type="match status" value="1"/>
</dbReference>
<dbReference type="FunFam" id="3.30.300.20:FF:000001">
    <property type="entry name" value="30S ribosomal protein S3"/>
    <property type="match status" value="1"/>
</dbReference>
<dbReference type="Gene3D" id="3.30.300.20">
    <property type="match status" value="1"/>
</dbReference>
<dbReference type="Gene3D" id="3.30.1140.32">
    <property type="entry name" value="Ribosomal protein S3, C-terminal domain"/>
    <property type="match status" value="1"/>
</dbReference>
<dbReference type="HAMAP" id="MF_01309_B">
    <property type="entry name" value="Ribosomal_uS3_B"/>
    <property type="match status" value="1"/>
</dbReference>
<dbReference type="InterPro" id="IPR004087">
    <property type="entry name" value="KH_dom"/>
</dbReference>
<dbReference type="InterPro" id="IPR015946">
    <property type="entry name" value="KH_dom-like_a/b"/>
</dbReference>
<dbReference type="InterPro" id="IPR004044">
    <property type="entry name" value="KH_dom_type_2"/>
</dbReference>
<dbReference type="InterPro" id="IPR009019">
    <property type="entry name" value="KH_sf_prok-type"/>
</dbReference>
<dbReference type="InterPro" id="IPR036419">
    <property type="entry name" value="Ribosomal_S3_C_sf"/>
</dbReference>
<dbReference type="InterPro" id="IPR005704">
    <property type="entry name" value="Ribosomal_uS3_bac-typ"/>
</dbReference>
<dbReference type="InterPro" id="IPR001351">
    <property type="entry name" value="Ribosomal_uS3_C"/>
</dbReference>
<dbReference type="InterPro" id="IPR018280">
    <property type="entry name" value="Ribosomal_uS3_CS"/>
</dbReference>
<dbReference type="NCBIfam" id="TIGR01009">
    <property type="entry name" value="rpsC_bact"/>
    <property type="match status" value="1"/>
</dbReference>
<dbReference type="PANTHER" id="PTHR11760">
    <property type="entry name" value="30S/40S RIBOSOMAL PROTEIN S3"/>
    <property type="match status" value="1"/>
</dbReference>
<dbReference type="PANTHER" id="PTHR11760:SF19">
    <property type="entry name" value="SMALL RIBOSOMAL SUBUNIT PROTEIN US3C"/>
    <property type="match status" value="1"/>
</dbReference>
<dbReference type="Pfam" id="PF07650">
    <property type="entry name" value="KH_2"/>
    <property type="match status" value="1"/>
</dbReference>
<dbReference type="Pfam" id="PF00189">
    <property type="entry name" value="Ribosomal_S3_C"/>
    <property type="match status" value="1"/>
</dbReference>
<dbReference type="SMART" id="SM00322">
    <property type="entry name" value="KH"/>
    <property type="match status" value="1"/>
</dbReference>
<dbReference type="SUPFAM" id="SSF54814">
    <property type="entry name" value="Prokaryotic type KH domain (KH-domain type II)"/>
    <property type="match status" value="1"/>
</dbReference>
<dbReference type="SUPFAM" id="SSF54821">
    <property type="entry name" value="Ribosomal protein S3 C-terminal domain"/>
    <property type="match status" value="1"/>
</dbReference>
<dbReference type="PROSITE" id="PS50823">
    <property type="entry name" value="KH_TYPE_2"/>
    <property type="match status" value="1"/>
</dbReference>
<dbReference type="PROSITE" id="PS00548">
    <property type="entry name" value="RIBOSOMAL_S3"/>
    <property type="match status" value="1"/>
</dbReference>
<evidence type="ECO:0000255" key="1">
    <source>
        <dbReference type="HAMAP-Rule" id="MF_01309"/>
    </source>
</evidence>
<evidence type="ECO:0000256" key="2">
    <source>
        <dbReference type="SAM" id="MobiDB-lite"/>
    </source>
</evidence>
<evidence type="ECO:0000305" key="3"/>
<proteinExistence type="inferred from homology"/>
<feature type="chain" id="PRO_0000293907" description="Small ribosomal subunit protein uS3">
    <location>
        <begin position="1"/>
        <end position="248"/>
    </location>
</feature>
<feature type="domain" description="KH type-2" evidence="1">
    <location>
        <begin position="39"/>
        <end position="113"/>
    </location>
</feature>
<feature type="region of interest" description="Disordered" evidence="2">
    <location>
        <begin position="218"/>
        <end position="248"/>
    </location>
</feature>
<feature type="compositionally biased region" description="Basic and acidic residues" evidence="2">
    <location>
        <begin position="238"/>
        <end position="248"/>
    </location>
</feature>
<keyword id="KW-0687">Ribonucleoprotein</keyword>
<keyword id="KW-0689">Ribosomal protein</keyword>
<keyword id="KW-0694">RNA-binding</keyword>
<keyword id="KW-0699">rRNA-binding</keyword>
<protein>
    <recommendedName>
        <fullName evidence="1">Small ribosomal subunit protein uS3</fullName>
    </recommendedName>
    <alternativeName>
        <fullName evidence="3">30S ribosomal protein S3</fullName>
    </alternativeName>
</protein>
<reference key="1">
    <citation type="journal article" date="2007" name="ISME J.">
        <title>Population level functional diversity in a microbial community revealed by comparative genomic and metagenomic analyses.</title>
        <authorList>
            <person name="Bhaya D."/>
            <person name="Grossman A.R."/>
            <person name="Steunou A.-S."/>
            <person name="Khuri N."/>
            <person name="Cohan F.M."/>
            <person name="Hamamura N."/>
            <person name="Melendrez M.C."/>
            <person name="Bateson M.M."/>
            <person name="Ward D.M."/>
            <person name="Heidelberg J.F."/>
        </authorList>
    </citation>
    <scope>NUCLEOTIDE SEQUENCE [LARGE SCALE GENOMIC DNA]</scope>
    <source>
        <strain>JA-3-3Ab</strain>
    </source>
</reference>
<gene>
    <name evidence="1" type="primary">rpsC</name>
    <name evidence="1" type="synonym">rps3</name>
    <name type="ordered locus">CYA_1172</name>
</gene>
<sequence>MGQKIHPTGFRLGVIKEHRSRWFADPARYPALLREDDLIRAYLTKQLSSAGLADIQIERKADQIDLEIRAARPGVVVGRGGSGLDALRQGLQKELSSHGSPERTIRINVVEVTRADAEAVLLAENIAQQLERRIAFRRIVRQVIQRAQRAGVQGIKIQIAGRLNGAEIARTEWTREGRIPLHTLRADIDYADHIAQTTFGVIGVKVWVFKGEVLPGQERPEQKVPLQQPKRRQQRRRPTFEDRSAVEA</sequence>
<organism>
    <name type="scientific">Synechococcus sp. (strain JA-3-3Ab)</name>
    <name type="common">Cyanobacteria bacterium Yellowstone A-Prime</name>
    <dbReference type="NCBI Taxonomy" id="321327"/>
    <lineage>
        <taxon>Bacteria</taxon>
        <taxon>Bacillati</taxon>
        <taxon>Cyanobacteriota</taxon>
        <taxon>Cyanophyceae</taxon>
        <taxon>Synechococcales</taxon>
        <taxon>Synechococcaceae</taxon>
        <taxon>Synechococcus</taxon>
    </lineage>
</organism>
<comment type="function">
    <text evidence="1">Binds the lower part of the 30S subunit head. Binds mRNA in the 70S ribosome, positioning it for translation.</text>
</comment>
<comment type="subunit">
    <text evidence="1">Part of the 30S ribosomal subunit. Forms a tight complex with proteins S10 and S14.</text>
</comment>
<comment type="similarity">
    <text evidence="1">Belongs to the universal ribosomal protein uS3 family.</text>
</comment>
<accession>Q2JV87</accession>